<keyword id="KW-0963">Cytoplasm</keyword>
<keyword id="KW-0324">Glycolysis</keyword>
<keyword id="KW-0456">Lyase</keyword>
<keyword id="KW-0460">Magnesium</keyword>
<keyword id="KW-0479">Metal-binding</keyword>
<keyword id="KW-1185">Reference proteome</keyword>
<keyword id="KW-0964">Secreted</keyword>
<gene>
    <name evidence="1" type="primary">eno</name>
    <name type="ordered locus">ESA_00523</name>
</gene>
<organism>
    <name type="scientific">Cronobacter sakazakii (strain ATCC BAA-894)</name>
    <name type="common">Enterobacter sakazakii</name>
    <dbReference type="NCBI Taxonomy" id="290339"/>
    <lineage>
        <taxon>Bacteria</taxon>
        <taxon>Pseudomonadati</taxon>
        <taxon>Pseudomonadota</taxon>
        <taxon>Gammaproteobacteria</taxon>
        <taxon>Enterobacterales</taxon>
        <taxon>Enterobacteriaceae</taxon>
        <taxon>Cronobacter</taxon>
    </lineage>
</organism>
<proteinExistence type="inferred from homology"/>
<dbReference type="EC" id="4.2.1.11" evidence="1"/>
<dbReference type="EMBL" id="CP000783">
    <property type="protein sequence ID" value="ABU75814.1"/>
    <property type="molecule type" value="Genomic_DNA"/>
</dbReference>
<dbReference type="RefSeq" id="WP_012123920.1">
    <property type="nucleotide sequence ID" value="NC_009778.1"/>
</dbReference>
<dbReference type="SMR" id="A7MQZ0"/>
<dbReference type="KEGG" id="esa:ESA_00523"/>
<dbReference type="PATRIC" id="fig|290339.8.peg.470"/>
<dbReference type="HOGENOM" id="CLU_031223_2_1_6"/>
<dbReference type="UniPathway" id="UPA00109">
    <property type="reaction ID" value="UER00187"/>
</dbReference>
<dbReference type="Proteomes" id="UP000000260">
    <property type="component" value="Chromosome"/>
</dbReference>
<dbReference type="GO" id="GO:0009986">
    <property type="term" value="C:cell surface"/>
    <property type="evidence" value="ECO:0007669"/>
    <property type="project" value="UniProtKB-SubCell"/>
</dbReference>
<dbReference type="GO" id="GO:0005576">
    <property type="term" value="C:extracellular region"/>
    <property type="evidence" value="ECO:0007669"/>
    <property type="project" value="UniProtKB-SubCell"/>
</dbReference>
<dbReference type="GO" id="GO:0000015">
    <property type="term" value="C:phosphopyruvate hydratase complex"/>
    <property type="evidence" value="ECO:0007669"/>
    <property type="project" value="InterPro"/>
</dbReference>
<dbReference type="GO" id="GO:0000287">
    <property type="term" value="F:magnesium ion binding"/>
    <property type="evidence" value="ECO:0007669"/>
    <property type="project" value="UniProtKB-UniRule"/>
</dbReference>
<dbReference type="GO" id="GO:0004634">
    <property type="term" value="F:phosphopyruvate hydratase activity"/>
    <property type="evidence" value="ECO:0007669"/>
    <property type="project" value="UniProtKB-UniRule"/>
</dbReference>
<dbReference type="GO" id="GO:0006096">
    <property type="term" value="P:glycolytic process"/>
    <property type="evidence" value="ECO:0007669"/>
    <property type="project" value="UniProtKB-UniRule"/>
</dbReference>
<dbReference type="CDD" id="cd03313">
    <property type="entry name" value="enolase"/>
    <property type="match status" value="1"/>
</dbReference>
<dbReference type="FunFam" id="3.20.20.120:FF:000001">
    <property type="entry name" value="Enolase"/>
    <property type="match status" value="1"/>
</dbReference>
<dbReference type="FunFam" id="3.30.390.10:FF:000001">
    <property type="entry name" value="Enolase"/>
    <property type="match status" value="1"/>
</dbReference>
<dbReference type="Gene3D" id="3.20.20.120">
    <property type="entry name" value="Enolase-like C-terminal domain"/>
    <property type="match status" value="1"/>
</dbReference>
<dbReference type="Gene3D" id="3.30.390.10">
    <property type="entry name" value="Enolase-like, N-terminal domain"/>
    <property type="match status" value="1"/>
</dbReference>
<dbReference type="HAMAP" id="MF_00318">
    <property type="entry name" value="Enolase"/>
    <property type="match status" value="1"/>
</dbReference>
<dbReference type="InterPro" id="IPR000941">
    <property type="entry name" value="Enolase"/>
</dbReference>
<dbReference type="InterPro" id="IPR036849">
    <property type="entry name" value="Enolase-like_C_sf"/>
</dbReference>
<dbReference type="InterPro" id="IPR029017">
    <property type="entry name" value="Enolase-like_N"/>
</dbReference>
<dbReference type="InterPro" id="IPR020810">
    <property type="entry name" value="Enolase_C"/>
</dbReference>
<dbReference type="InterPro" id="IPR020809">
    <property type="entry name" value="Enolase_CS"/>
</dbReference>
<dbReference type="InterPro" id="IPR020811">
    <property type="entry name" value="Enolase_N"/>
</dbReference>
<dbReference type="NCBIfam" id="TIGR01060">
    <property type="entry name" value="eno"/>
    <property type="match status" value="1"/>
</dbReference>
<dbReference type="PANTHER" id="PTHR11902">
    <property type="entry name" value="ENOLASE"/>
    <property type="match status" value="1"/>
</dbReference>
<dbReference type="PANTHER" id="PTHR11902:SF1">
    <property type="entry name" value="ENOLASE"/>
    <property type="match status" value="1"/>
</dbReference>
<dbReference type="Pfam" id="PF00113">
    <property type="entry name" value="Enolase_C"/>
    <property type="match status" value="1"/>
</dbReference>
<dbReference type="Pfam" id="PF03952">
    <property type="entry name" value="Enolase_N"/>
    <property type="match status" value="1"/>
</dbReference>
<dbReference type="PIRSF" id="PIRSF001400">
    <property type="entry name" value="Enolase"/>
    <property type="match status" value="1"/>
</dbReference>
<dbReference type="PRINTS" id="PR00148">
    <property type="entry name" value="ENOLASE"/>
</dbReference>
<dbReference type="SFLD" id="SFLDF00002">
    <property type="entry name" value="enolase"/>
    <property type="match status" value="1"/>
</dbReference>
<dbReference type="SFLD" id="SFLDG00178">
    <property type="entry name" value="enolase"/>
    <property type="match status" value="1"/>
</dbReference>
<dbReference type="SMART" id="SM01192">
    <property type="entry name" value="Enolase_C"/>
    <property type="match status" value="1"/>
</dbReference>
<dbReference type="SMART" id="SM01193">
    <property type="entry name" value="Enolase_N"/>
    <property type="match status" value="1"/>
</dbReference>
<dbReference type="SUPFAM" id="SSF51604">
    <property type="entry name" value="Enolase C-terminal domain-like"/>
    <property type="match status" value="1"/>
</dbReference>
<dbReference type="SUPFAM" id="SSF54826">
    <property type="entry name" value="Enolase N-terminal domain-like"/>
    <property type="match status" value="1"/>
</dbReference>
<dbReference type="PROSITE" id="PS00164">
    <property type="entry name" value="ENOLASE"/>
    <property type="match status" value="1"/>
</dbReference>
<feature type="chain" id="PRO_1000019207" description="Enolase">
    <location>
        <begin position="1"/>
        <end position="432"/>
    </location>
</feature>
<feature type="active site" description="Proton donor" evidence="1">
    <location>
        <position position="209"/>
    </location>
</feature>
<feature type="active site" description="Proton acceptor" evidence="1">
    <location>
        <position position="342"/>
    </location>
</feature>
<feature type="binding site" evidence="1">
    <location>
        <position position="167"/>
    </location>
    <ligand>
        <name>(2R)-2-phosphoglycerate</name>
        <dbReference type="ChEBI" id="CHEBI:58289"/>
    </ligand>
</feature>
<feature type="binding site" evidence="1">
    <location>
        <position position="246"/>
    </location>
    <ligand>
        <name>Mg(2+)</name>
        <dbReference type="ChEBI" id="CHEBI:18420"/>
    </ligand>
</feature>
<feature type="binding site" evidence="1">
    <location>
        <position position="290"/>
    </location>
    <ligand>
        <name>Mg(2+)</name>
        <dbReference type="ChEBI" id="CHEBI:18420"/>
    </ligand>
</feature>
<feature type="binding site" evidence="1">
    <location>
        <position position="317"/>
    </location>
    <ligand>
        <name>Mg(2+)</name>
        <dbReference type="ChEBI" id="CHEBI:18420"/>
    </ligand>
</feature>
<feature type="binding site" evidence="1">
    <location>
        <position position="342"/>
    </location>
    <ligand>
        <name>(2R)-2-phosphoglycerate</name>
        <dbReference type="ChEBI" id="CHEBI:58289"/>
    </ligand>
</feature>
<feature type="binding site" evidence="1">
    <location>
        <position position="371"/>
    </location>
    <ligand>
        <name>(2R)-2-phosphoglycerate</name>
        <dbReference type="ChEBI" id="CHEBI:58289"/>
    </ligand>
</feature>
<feature type="binding site" evidence="1">
    <location>
        <position position="372"/>
    </location>
    <ligand>
        <name>(2R)-2-phosphoglycerate</name>
        <dbReference type="ChEBI" id="CHEBI:58289"/>
    </ligand>
</feature>
<feature type="binding site" evidence="1">
    <location>
        <position position="393"/>
    </location>
    <ligand>
        <name>(2R)-2-phosphoglycerate</name>
        <dbReference type="ChEBI" id="CHEBI:58289"/>
    </ligand>
</feature>
<evidence type="ECO:0000255" key="1">
    <source>
        <dbReference type="HAMAP-Rule" id="MF_00318"/>
    </source>
</evidence>
<name>ENO_CROS8</name>
<comment type="function">
    <text evidence="1">Catalyzes the reversible conversion of 2-phosphoglycerate (2-PG) into phosphoenolpyruvate (PEP). It is essential for the degradation of carbohydrates via glycolysis.</text>
</comment>
<comment type="catalytic activity">
    <reaction evidence="1">
        <text>(2R)-2-phosphoglycerate = phosphoenolpyruvate + H2O</text>
        <dbReference type="Rhea" id="RHEA:10164"/>
        <dbReference type="ChEBI" id="CHEBI:15377"/>
        <dbReference type="ChEBI" id="CHEBI:58289"/>
        <dbReference type="ChEBI" id="CHEBI:58702"/>
        <dbReference type="EC" id="4.2.1.11"/>
    </reaction>
</comment>
<comment type="cofactor">
    <cofactor evidence="1">
        <name>Mg(2+)</name>
        <dbReference type="ChEBI" id="CHEBI:18420"/>
    </cofactor>
    <text evidence="1">Binds a second Mg(2+) ion via substrate during catalysis.</text>
</comment>
<comment type="pathway">
    <text evidence="1">Carbohydrate degradation; glycolysis; pyruvate from D-glyceraldehyde 3-phosphate: step 4/5.</text>
</comment>
<comment type="subunit">
    <text evidence="1">Component of the RNA degradosome, a multiprotein complex involved in RNA processing and mRNA degradation.</text>
</comment>
<comment type="subcellular location">
    <subcellularLocation>
        <location evidence="1">Cytoplasm</location>
    </subcellularLocation>
    <subcellularLocation>
        <location evidence="1">Secreted</location>
    </subcellularLocation>
    <subcellularLocation>
        <location evidence="1">Cell surface</location>
    </subcellularLocation>
    <text evidence="1">Fractions of enolase are present in both the cytoplasm and on the cell surface.</text>
</comment>
<comment type="similarity">
    <text evidence="1">Belongs to the enolase family.</text>
</comment>
<protein>
    <recommendedName>
        <fullName evidence="1">Enolase</fullName>
        <ecNumber evidence="1">4.2.1.11</ecNumber>
    </recommendedName>
    <alternativeName>
        <fullName evidence="1">2-phospho-D-glycerate hydro-lyase</fullName>
    </alternativeName>
    <alternativeName>
        <fullName evidence="1">2-phosphoglycerate dehydratase</fullName>
    </alternativeName>
</protein>
<accession>A7MQZ0</accession>
<sequence length="432" mass="45544">MSKIVKVIGREIIDSRGNPTVEAEVHLEGGFVGMAAAPSGASTGSREALELRDGDKSRFLGKGVTKAVGAVNGPIAQAIVGKDAKDQAGIDKIMIDLDGTENKSNFGANAILAVSLANAKAAAASKGMPLYEHIAELNGTPGKFSMPVPMMNIINGGEHADNNVDIQEFMIQPVGASSVKEAIRMGSEVFHHLAKVLKGKGMNTAVGDEGGYAPNLGSNAEALAVIAEAVKAAGYELGKDITLAMDCAASEFYKDGKYVLAGEGNKAFTSEEFTHFLEDLTKQYPIVSIEDGLDESDWDGFAYQTKVLGDKIQLVGDDLFVTNTKILKEGIEKGIANSILIKFNQIGSLTETLAAIKMAKDAGYTAVISHRSGETEDATIADLAVGTAAGQIKTGSMSRSDRVAKYNQLIRIEEALGEKAPYNGRREIKGQA</sequence>
<reference key="1">
    <citation type="journal article" date="2010" name="PLoS ONE">
        <title>Genome sequence of Cronobacter sakazakii BAA-894 and comparative genomic hybridization analysis with other Cronobacter species.</title>
        <authorList>
            <person name="Kucerova E."/>
            <person name="Clifton S.W."/>
            <person name="Xia X.Q."/>
            <person name="Long F."/>
            <person name="Porwollik S."/>
            <person name="Fulton L."/>
            <person name="Fronick C."/>
            <person name="Minx P."/>
            <person name="Kyung K."/>
            <person name="Warren W."/>
            <person name="Fulton R."/>
            <person name="Feng D."/>
            <person name="Wollam A."/>
            <person name="Shah N."/>
            <person name="Bhonagiri V."/>
            <person name="Nash W.E."/>
            <person name="Hallsworth-Pepin K."/>
            <person name="Wilson R.K."/>
            <person name="McClelland M."/>
            <person name="Forsythe S.J."/>
        </authorList>
    </citation>
    <scope>NUCLEOTIDE SEQUENCE [LARGE SCALE GENOMIC DNA]</scope>
    <source>
        <strain>ATCC BAA-894</strain>
    </source>
</reference>